<dbReference type="EMBL" id="CP000705">
    <property type="protein sequence ID" value="ABQ83501.1"/>
    <property type="molecule type" value="Genomic_DNA"/>
</dbReference>
<dbReference type="RefSeq" id="WP_003668489.1">
    <property type="nucleotide sequence ID" value="NZ_AZDD01000001.1"/>
</dbReference>
<dbReference type="SMR" id="A5VKX7"/>
<dbReference type="STRING" id="557436.Lreu_1244"/>
<dbReference type="GeneID" id="77191914"/>
<dbReference type="KEGG" id="lre:Lreu_1244"/>
<dbReference type="PATRIC" id="fig|557436.17.peg.112"/>
<dbReference type="eggNOG" id="COG1327">
    <property type="taxonomic scope" value="Bacteria"/>
</dbReference>
<dbReference type="HOGENOM" id="CLU_108412_0_0_9"/>
<dbReference type="Proteomes" id="UP000001991">
    <property type="component" value="Chromosome"/>
</dbReference>
<dbReference type="GO" id="GO:0005524">
    <property type="term" value="F:ATP binding"/>
    <property type="evidence" value="ECO:0007669"/>
    <property type="project" value="UniProtKB-KW"/>
</dbReference>
<dbReference type="GO" id="GO:0003677">
    <property type="term" value="F:DNA binding"/>
    <property type="evidence" value="ECO:0007669"/>
    <property type="project" value="UniProtKB-KW"/>
</dbReference>
<dbReference type="GO" id="GO:0008270">
    <property type="term" value="F:zinc ion binding"/>
    <property type="evidence" value="ECO:0007669"/>
    <property type="project" value="UniProtKB-UniRule"/>
</dbReference>
<dbReference type="GO" id="GO:0045892">
    <property type="term" value="P:negative regulation of DNA-templated transcription"/>
    <property type="evidence" value="ECO:0007669"/>
    <property type="project" value="UniProtKB-UniRule"/>
</dbReference>
<dbReference type="HAMAP" id="MF_00440">
    <property type="entry name" value="NrdR"/>
    <property type="match status" value="1"/>
</dbReference>
<dbReference type="InterPro" id="IPR005144">
    <property type="entry name" value="ATP-cone_dom"/>
</dbReference>
<dbReference type="InterPro" id="IPR055173">
    <property type="entry name" value="NrdR-like_N"/>
</dbReference>
<dbReference type="InterPro" id="IPR003796">
    <property type="entry name" value="RNR_NrdR-like"/>
</dbReference>
<dbReference type="NCBIfam" id="TIGR00244">
    <property type="entry name" value="transcriptional regulator NrdR"/>
    <property type="match status" value="1"/>
</dbReference>
<dbReference type="PANTHER" id="PTHR30455">
    <property type="entry name" value="TRANSCRIPTIONAL REPRESSOR NRDR"/>
    <property type="match status" value="1"/>
</dbReference>
<dbReference type="PANTHER" id="PTHR30455:SF2">
    <property type="entry name" value="TRANSCRIPTIONAL REPRESSOR NRDR"/>
    <property type="match status" value="1"/>
</dbReference>
<dbReference type="Pfam" id="PF03477">
    <property type="entry name" value="ATP-cone"/>
    <property type="match status" value="1"/>
</dbReference>
<dbReference type="Pfam" id="PF22811">
    <property type="entry name" value="Zn_ribbon_NrdR"/>
    <property type="match status" value="1"/>
</dbReference>
<dbReference type="PROSITE" id="PS51161">
    <property type="entry name" value="ATP_CONE"/>
    <property type="match status" value="1"/>
</dbReference>
<name>NRDR_LIMRD</name>
<gene>
    <name evidence="1" type="primary">nrdR</name>
    <name type="ordered locus">Lreu_1244</name>
</gene>
<proteinExistence type="inferred from homology"/>
<sequence>MRCPHCHKNGSRVVDSRPSEDGSFIRRRRECIHCGFRFTTFERYEETPLLVIKKDGTRQEFSRQKILNGIVRSAEKRPVSMERLTKIADKVEKQIRSIGESEVSSQIIGKFVMNELKGVDEIAYIRFASVYRQFKDVDAFMSELETMMKAEHKK</sequence>
<organism>
    <name type="scientific">Limosilactobacillus reuteri (strain DSM 20016)</name>
    <name type="common">Lactobacillus reuteri</name>
    <dbReference type="NCBI Taxonomy" id="557436"/>
    <lineage>
        <taxon>Bacteria</taxon>
        <taxon>Bacillati</taxon>
        <taxon>Bacillota</taxon>
        <taxon>Bacilli</taxon>
        <taxon>Lactobacillales</taxon>
        <taxon>Lactobacillaceae</taxon>
        <taxon>Limosilactobacillus</taxon>
    </lineage>
</organism>
<protein>
    <recommendedName>
        <fullName evidence="1">Transcriptional repressor NrdR</fullName>
    </recommendedName>
</protein>
<reference key="1">
    <citation type="journal article" date="2011" name="PLoS Genet.">
        <title>The evolution of host specialization in the vertebrate gut symbiont Lactobacillus reuteri.</title>
        <authorList>
            <person name="Frese S.A."/>
            <person name="Benson A.K."/>
            <person name="Tannock G.W."/>
            <person name="Loach D.M."/>
            <person name="Kim J."/>
            <person name="Zhang M."/>
            <person name="Oh P.L."/>
            <person name="Heng N.C."/>
            <person name="Patil P.B."/>
            <person name="Juge N."/>
            <person name="Mackenzie D.A."/>
            <person name="Pearson B.M."/>
            <person name="Lapidus A."/>
            <person name="Dalin E."/>
            <person name="Tice H."/>
            <person name="Goltsman E."/>
            <person name="Land M."/>
            <person name="Hauser L."/>
            <person name="Ivanova N."/>
            <person name="Kyrpides N.C."/>
            <person name="Walter J."/>
        </authorList>
    </citation>
    <scope>NUCLEOTIDE SEQUENCE [LARGE SCALE GENOMIC DNA]</scope>
    <source>
        <strain>DSM 20016</strain>
    </source>
</reference>
<keyword id="KW-0067">ATP-binding</keyword>
<keyword id="KW-0238">DNA-binding</keyword>
<keyword id="KW-0479">Metal-binding</keyword>
<keyword id="KW-0547">Nucleotide-binding</keyword>
<keyword id="KW-1185">Reference proteome</keyword>
<keyword id="KW-0678">Repressor</keyword>
<keyword id="KW-0804">Transcription</keyword>
<keyword id="KW-0805">Transcription regulation</keyword>
<keyword id="KW-0862">Zinc</keyword>
<keyword id="KW-0863">Zinc-finger</keyword>
<comment type="function">
    <text evidence="1">Negatively regulates transcription of bacterial ribonucleotide reductase nrd genes and operons by binding to NrdR-boxes.</text>
</comment>
<comment type="cofactor">
    <cofactor evidence="1">
        <name>Zn(2+)</name>
        <dbReference type="ChEBI" id="CHEBI:29105"/>
    </cofactor>
    <text evidence="1">Binds 1 zinc ion.</text>
</comment>
<comment type="similarity">
    <text evidence="1">Belongs to the NrdR family.</text>
</comment>
<accession>A5VKX7</accession>
<evidence type="ECO:0000255" key="1">
    <source>
        <dbReference type="HAMAP-Rule" id="MF_00440"/>
    </source>
</evidence>
<feature type="chain" id="PRO_1000080769" description="Transcriptional repressor NrdR">
    <location>
        <begin position="1"/>
        <end position="154"/>
    </location>
</feature>
<feature type="domain" description="ATP-cone" evidence="1">
    <location>
        <begin position="49"/>
        <end position="139"/>
    </location>
</feature>
<feature type="zinc finger region" evidence="1">
    <location>
        <begin position="3"/>
        <end position="34"/>
    </location>
</feature>